<organism>
    <name type="scientific">Mus musculus</name>
    <name type="common">Mouse</name>
    <dbReference type="NCBI Taxonomy" id="10090"/>
    <lineage>
        <taxon>Eukaryota</taxon>
        <taxon>Metazoa</taxon>
        <taxon>Chordata</taxon>
        <taxon>Craniata</taxon>
        <taxon>Vertebrata</taxon>
        <taxon>Euteleostomi</taxon>
        <taxon>Mammalia</taxon>
        <taxon>Eutheria</taxon>
        <taxon>Euarchontoglires</taxon>
        <taxon>Glires</taxon>
        <taxon>Rodentia</taxon>
        <taxon>Myomorpha</taxon>
        <taxon>Muroidea</taxon>
        <taxon>Muridae</taxon>
        <taxon>Murinae</taxon>
        <taxon>Mus</taxon>
        <taxon>Mus</taxon>
    </lineage>
</organism>
<accession>Q9JKF4</accession>
<accession>Q9JKF2</accession>
<accession>Q9JKF3</accession>
<sequence length="209" mass="24324">MVQERQSQGKGVCWTLRLWSAAVISMLLLSTCFIASCVVTYQFIMDQPSRRLYELHTYHSSLTCFSEGTMVSEKMWGCCPNHWKSFGSSCYLISTKENFWSTSEQNCVQMGAHLVVINTEAEQNFITQQLNESLSYFLGLSDPQGNGKWQWIDDTPFSQNVRFWHPHEPNLPEERCVSIVYWNPSKWGWNDVFCDSKHNSICEMKKIYL</sequence>
<protein>
    <recommendedName>
        <fullName>C-type lectin domain family 6 member A</fullName>
    </recommendedName>
    <alternativeName>
        <fullName>C-type lectin superfamily member 10</fullName>
    </alternativeName>
    <alternativeName>
        <fullName evidence="12">Dendritic cell-associated C-type lectin 2</fullName>
        <shortName evidence="12">DC-associated C-type lectin 2</shortName>
        <shortName evidence="12">Dectin-2</shortName>
    </alternativeName>
</protein>
<reference key="1">
    <citation type="journal article" date="2000" name="J. Biol. Chem.">
        <title>Cloning of a second dendritic cell-associated C-type lectin (dectin-2) and its alternatively spliced isoforms.</title>
        <authorList>
            <person name="Ariizumi K."/>
            <person name="Shen G.-L."/>
            <person name="Shikano S."/>
            <person name="Ritter R. III"/>
            <person name="Zukas P."/>
            <person name="Edelbaum D."/>
            <person name="Morita A."/>
            <person name="Takashima A."/>
        </authorList>
    </citation>
    <scope>NUCLEOTIDE SEQUENCE [MRNA] (ISOFORMS 1; 2 AND 3)</scope>
    <scope>TISSUE SPECIFICITY</scope>
    <source>
        <strain>BALB/cJ</strain>
    </source>
</reference>
<reference key="2">
    <citation type="journal article" date="2004" name="Genome Res.">
        <title>The status, quality, and expansion of the NIH full-length cDNA project: the Mammalian Gene Collection (MGC).</title>
        <authorList>
            <consortium name="The MGC Project Team"/>
        </authorList>
    </citation>
    <scope>NUCLEOTIDE SEQUENCE [LARGE SCALE MRNA] (ISOFORM 1)</scope>
    <source>
        <strain>FVB/N-3</strain>
        <tissue>Mammary tumor</tissue>
    </source>
</reference>
<reference key="3">
    <citation type="journal article" date="2006" name="J. Biol. Chem.">
        <title>Dectin-2 is a pattern recognition receptor for fungi that couples with the Fc receptor gamma chain to induce innate immune responses.</title>
        <authorList>
            <person name="Sato K."/>
            <person name="Yang X.L."/>
            <person name="Yudate T."/>
            <person name="Chung J.S."/>
            <person name="Wu J."/>
            <person name="Luby-Phelps K."/>
            <person name="Kimberly R.P."/>
            <person name="Underhill D."/>
            <person name="Cruz P.D. Jr."/>
            <person name="Ariizumi K."/>
        </authorList>
    </citation>
    <scope>FUNCTION</scope>
    <scope>INTERACTION WITH FCER1G</scope>
    <scope>MUTAGENESIS OF ARG-17</scope>
</reference>
<reference key="4">
    <citation type="journal article" date="2009" name="J. Exp. Med.">
        <title>Dectin-2 is a Syk-coupled pattern recognition receptor crucial for Th17 responses to fungal infection.</title>
        <authorList>
            <person name="Robinson M.J."/>
            <person name="Osorio F."/>
            <person name="Rosas M."/>
            <person name="Freitas R.P."/>
            <person name="Schweighoffer E."/>
            <person name="Gross O."/>
            <person name="Verbeek J.S."/>
            <person name="Ruland J."/>
            <person name="Tybulewicz V."/>
            <person name="Brown G.D."/>
            <person name="Moita L.F."/>
            <person name="Taylor P.R."/>
            <person name="Reis e Sousa C."/>
        </authorList>
    </citation>
    <scope>FUNCTION</scope>
</reference>
<reference key="5">
    <citation type="journal article" date="2009" name="J. Immunol.">
        <title>Dectin-2 recognition of house dust mite triggers cysteinyl leukotriene generation by dendritic cells.</title>
        <authorList>
            <person name="Barrett N.A."/>
            <person name="Maekawa A."/>
            <person name="Rahman O.M."/>
            <person name="Austen K.F."/>
            <person name="Kanaoka Y."/>
        </authorList>
    </citation>
    <scope>FUNCTION</scope>
</reference>
<reference key="6">
    <citation type="journal article" date="2010" name="Cell">
        <title>A tissue-specific atlas of mouse protein phosphorylation and expression.</title>
        <authorList>
            <person name="Huttlin E.L."/>
            <person name="Jedrychowski M.P."/>
            <person name="Elias J.E."/>
            <person name="Goswami T."/>
            <person name="Rad R."/>
            <person name="Beausoleil S.A."/>
            <person name="Villen J."/>
            <person name="Haas W."/>
            <person name="Sowa M.E."/>
            <person name="Gygi S.P."/>
        </authorList>
    </citation>
    <scope>IDENTIFICATION BY MASS SPECTROMETRY [LARGE SCALE ANALYSIS]</scope>
    <source>
        <tissue>Spleen</tissue>
    </source>
</reference>
<reference key="7">
    <citation type="journal article" date="2010" name="Immunity">
        <title>Dectin-2 recognition of alpha-mannans and induction of Th17 cell differentiation is essential for host defense against Candida albicans.</title>
        <authorList>
            <person name="Saijo S."/>
            <person name="Ikeda S."/>
            <person name="Yamabe K."/>
            <person name="Kakuta S."/>
            <person name="Ishigame H."/>
            <person name="Akitsu A."/>
            <person name="Fujikado N."/>
            <person name="Kusaka T."/>
            <person name="Kubo S."/>
            <person name="Chung S.H."/>
            <person name="Komatsu R."/>
            <person name="Miura N."/>
            <person name="Adachi Y."/>
            <person name="Ohno N."/>
            <person name="Shibuya K."/>
            <person name="Yamamoto N."/>
            <person name="Kawakami K."/>
            <person name="Yamasaki S."/>
            <person name="Saito T."/>
            <person name="Akira S."/>
            <person name="Iwakura Y."/>
        </authorList>
    </citation>
    <scope>DISRUPTION PHENOTYPE</scope>
    <scope>FUNCTION</scope>
</reference>
<reference key="8">
    <citation type="journal article" date="2010" name="Proc. Natl. Acad. Sci. U.S.A.">
        <title>Schistosoma mansoni triggers Dectin-2, which activates the Nlrp3 inflammasome and alters adaptive immune responses.</title>
        <authorList>
            <person name="Ritter M."/>
            <person name="Gross O."/>
            <person name="Kays S."/>
            <person name="Ruland J."/>
            <person name="Nimmerjahn F."/>
            <person name="Saijo S."/>
            <person name="Tschopp J."/>
            <person name="Layland L.E."/>
            <person name="Prazeres da Costa C."/>
        </authorList>
    </citation>
    <scope>FUNCTION</scope>
</reference>
<reference key="9">
    <citation type="journal article" date="2020" name="J. Immunol.">
        <title>CARD9-associated Dectin-1 and Dectin-2 are required for protective immunity of a multivalent vaccine against coccidioides posadasii infection.</title>
        <authorList>
            <person name="Campuzano A."/>
            <person name="Zhang H."/>
            <person name="Ostroff G.R."/>
            <person name="Dos Santos Dias L."/>
            <person name="Wuethrich M."/>
            <person name="Klein B.S."/>
            <person name="Yu J.J."/>
            <person name="Lara H.H."/>
            <person name="Lopez-Ribot J.L."/>
            <person name="Hung C.Y."/>
        </authorList>
    </citation>
    <scope>FUNCTION</scope>
</reference>
<proteinExistence type="evidence at protein level"/>
<dbReference type="EMBL" id="AF240357">
    <property type="protein sequence ID" value="AAF67177.1"/>
    <property type="molecule type" value="mRNA"/>
</dbReference>
<dbReference type="EMBL" id="AF240358">
    <property type="protein sequence ID" value="AAF67178.1"/>
    <property type="molecule type" value="mRNA"/>
</dbReference>
<dbReference type="EMBL" id="AF240359">
    <property type="protein sequence ID" value="AAF67179.1"/>
    <property type="molecule type" value="mRNA"/>
</dbReference>
<dbReference type="EMBL" id="BC023008">
    <property type="protein sequence ID" value="AAH23008.1"/>
    <property type="molecule type" value="mRNA"/>
</dbReference>
<dbReference type="CCDS" id="CCDS20512.1">
    <molecule id="Q9JKF4-1"/>
</dbReference>
<dbReference type="CCDS" id="CCDS51895.1">
    <molecule id="Q9JKF4-2"/>
</dbReference>
<dbReference type="RefSeq" id="NP_001177250.1">
    <molecule id="Q9JKF4-2"/>
    <property type="nucleotide sequence ID" value="NM_001190321.1"/>
</dbReference>
<dbReference type="RefSeq" id="NP_064385.1">
    <molecule id="Q9JKF4-1"/>
    <property type="nucleotide sequence ID" value="NM_020001.2"/>
</dbReference>
<dbReference type="SMR" id="Q9JKF4"/>
<dbReference type="FunCoup" id="Q9JKF4">
    <property type="interactions" value="239"/>
</dbReference>
<dbReference type="STRING" id="10090.ENSMUSP00000024118"/>
<dbReference type="GlyCosmos" id="Q9JKF4">
    <property type="glycosylation" value="1 site, No reported glycans"/>
</dbReference>
<dbReference type="GlyGen" id="Q9JKF4">
    <property type="glycosylation" value="1 site"/>
</dbReference>
<dbReference type="iPTMnet" id="Q9JKF4"/>
<dbReference type="PhosphoSitePlus" id="Q9JKF4"/>
<dbReference type="PaxDb" id="10090-ENSMUSP00000024118"/>
<dbReference type="Antibodypedia" id="23055">
    <property type="antibodies" value="467 antibodies from 30 providers"/>
</dbReference>
<dbReference type="DNASU" id="56620"/>
<dbReference type="Ensembl" id="ENSMUST00000024118.11">
    <molecule id="Q9JKF4-1"/>
    <property type="protein sequence ID" value="ENSMUSP00000024118.5"/>
    <property type="gene ID" value="ENSMUSG00000023349.15"/>
</dbReference>
<dbReference type="Ensembl" id="ENSMUST00000112554.9">
    <molecule id="Q9JKF4-2"/>
    <property type="protein sequence ID" value="ENSMUSP00000108173.3"/>
    <property type="gene ID" value="ENSMUSG00000023349.15"/>
</dbReference>
<dbReference type="GeneID" id="56620"/>
<dbReference type="KEGG" id="mmu:56620"/>
<dbReference type="UCSC" id="uc009dqe.2">
    <molecule id="Q9JKF4-1"/>
    <property type="organism name" value="mouse"/>
</dbReference>
<dbReference type="UCSC" id="uc009dqf.2">
    <molecule id="Q9JKF4-2"/>
    <property type="organism name" value="mouse"/>
</dbReference>
<dbReference type="AGR" id="MGI:1861231"/>
<dbReference type="CTD" id="56620"/>
<dbReference type="MGI" id="MGI:1861231">
    <property type="gene designation" value="Clec4n"/>
</dbReference>
<dbReference type="VEuPathDB" id="HostDB:ENSMUSG00000023349"/>
<dbReference type="eggNOG" id="KOG4297">
    <property type="taxonomic scope" value="Eukaryota"/>
</dbReference>
<dbReference type="GeneTree" id="ENSGT00940000162938"/>
<dbReference type="HOGENOM" id="CLU_049894_7_5_1"/>
<dbReference type="InParanoid" id="Q9JKF4"/>
<dbReference type="OMA" id="EKNVRFW"/>
<dbReference type="OrthoDB" id="6133475at2759"/>
<dbReference type="PhylomeDB" id="Q9JKF4"/>
<dbReference type="TreeFam" id="TF333341"/>
<dbReference type="Reactome" id="R-MMU-5621480">
    <property type="pathway name" value="Dectin-2 family"/>
</dbReference>
<dbReference type="Reactome" id="R-MMU-6798695">
    <property type="pathway name" value="Neutrophil degranulation"/>
</dbReference>
<dbReference type="BioGRID-ORCS" id="56620">
    <property type="hits" value="1 hit in 80 CRISPR screens"/>
</dbReference>
<dbReference type="PRO" id="PR:Q9JKF4"/>
<dbReference type="Proteomes" id="UP000000589">
    <property type="component" value="Chromosome 6"/>
</dbReference>
<dbReference type="RNAct" id="Q9JKF4">
    <property type="molecule type" value="protein"/>
</dbReference>
<dbReference type="Bgee" id="ENSMUSG00000023349">
    <property type="expression patterns" value="Expressed in stroma of bone marrow and 97 other cell types or tissues"/>
</dbReference>
<dbReference type="ExpressionAtlas" id="Q9JKF4">
    <property type="expression patterns" value="baseline and differential"/>
</dbReference>
<dbReference type="GO" id="GO:0005886">
    <property type="term" value="C:plasma membrane"/>
    <property type="evidence" value="ECO:0000250"/>
    <property type="project" value="UniProtKB"/>
</dbReference>
<dbReference type="GO" id="GO:0005509">
    <property type="term" value="F:calcium ion binding"/>
    <property type="evidence" value="ECO:0000250"/>
    <property type="project" value="UniProtKB"/>
</dbReference>
<dbReference type="GO" id="GO:0030246">
    <property type="term" value="F:carbohydrate binding"/>
    <property type="evidence" value="ECO:0000314"/>
    <property type="project" value="UniProtKB"/>
</dbReference>
<dbReference type="GO" id="GO:0005537">
    <property type="term" value="F:D-mannose binding"/>
    <property type="evidence" value="ECO:0000250"/>
    <property type="project" value="UniProtKB"/>
</dbReference>
<dbReference type="GO" id="GO:0038187">
    <property type="term" value="F:pattern recognition receptor activity"/>
    <property type="evidence" value="ECO:0000315"/>
    <property type="project" value="ARUK-UCL"/>
</dbReference>
<dbReference type="GO" id="GO:0002250">
    <property type="term" value="P:adaptive immune response"/>
    <property type="evidence" value="ECO:0007669"/>
    <property type="project" value="UniProtKB-KW"/>
</dbReference>
<dbReference type="GO" id="GO:0061760">
    <property type="term" value="P:antifungal innate immune response"/>
    <property type="evidence" value="ECO:0000315"/>
    <property type="project" value="UniProtKB"/>
</dbReference>
<dbReference type="GO" id="GO:0050832">
    <property type="term" value="P:defense response to fungus"/>
    <property type="evidence" value="ECO:0000314"/>
    <property type="project" value="UniProtKB"/>
</dbReference>
<dbReference type="GO" id="GO:0001879">
    <property type="term" value="P:detection of yeast"/>
    <property type="evidence" value="ECO:0000315"/>
    <property type="project" value="ARUK-UCL"/>
</dbReference>
<dbReference type="GO" id="GO:0045087">
    <property type="term" value="P:innate immune response"/>
    <property type="evidence" value="ECO:0000314"/>
    <property type="project" value="UniProtKB"/>
</dbReference>
<dbReference type="GO" id="GO:0043123">
    <property type="term" value="P:positive regulation of canonical NF-kappaB signal transduction"/>
    <property type="evidence" value="ECO:0000314"/>
    <property type="project" value="UniProtKB"/>
</dbReference>
<dbReference type="GO" id="GO:0001819">
    <property type="term" value="P:positive regulation of cytokine production"/>
    <property type="evidence" value="ECO:0000314"/>
    <property type="project" value="UniProtKB"/>
</dbReference>
<dbReference type="GO" id="GO:1902533">
    <property type="term" value="P:positive regulation of intracellular signal transduction"/>
    <property type="evidence" value="ECO:0000315"/>
    <property type="project" value="ARUK-UCL"/>
</dbReference>
<dbReference type="GO" id="GO:2000318">
    <property type="term" value="P:positive regulation of T-helper 17 type immune response"/>
    <property type="evidence" value="ECO:0000315"/>
    <property type="project" value="UniProtKB"/>
</dbReference>
<dbReference type="GO" id="GO:0001878">
    <property type="term" value="P:response to yeast"/>
    <property type="evidence" value="ECO:0000315"/>
    <property type="project" value="ARUK-UCL"/>
</dbReference>
<dbReference type="GO" id="GO:0002223">
    <property type="term" value="P:stimulatory C-type lectin receptor signaling pathway"/>
    <property type="evidence" value="ECO:0000315"/>
    <property type="project" value="ARUK-UCL"/>
</dbReference>
<dbReference type="CDD" id="cd03590">
    <property type="entry name" value="CLECT_DC-SIGN_like"/>
    <property type="match status" value="1"/>
</dbReference>
<dbReference type="FunFam" id="3.10.100.10:FF:000024">
    <property type="entry name" value="C-type lectin domain family 4 member A"/>
    <property type="match status" value="1"/>
</dbReference>
<dbReference type="Gene3D" id="3.10.100.10">
    <property type="entry name" value="Mannose-Binding Protein A, subunit A"/>
    <property type="match status" value="1"/>
</dbReference>
<dbReference type="InterPro" id="IPR001304">
    <property type="entry name" value="C-type_lectin-like"/>
</dbReference>
<dbReference type="InterPro" id="IPR016186">
    <property type="entry name" value="C-type_lectin-like/link_sf"/>
</dbReference>
<dbReference type="InterPro" id="IPR050111">
    <property type="entry name" value="C-type_lectin/snaclec_domain"/>
</dbReference>
<dbReference type="InterPro" id="IPR018378">
    <property type="entry name" value="C-type_lectin_CS"/>
</dbReference>
<dbReference type="InterPro" id="IPR033989">
    <property type="entry name" value="CD209-like_CTLD"/>
</dbReference>
<dbReference type="InterPro" id="IPR016187">
    <property type="entry name" value="CTDL_fold"/>
</dbReference>
<dbReference type="PANTHER" id="PTHR22803">
    <property type="entry name" value="MANNOSE, PHOSPHOLIPASE, LECTIN RECEPTOR RELATED"/>
    <property type="match status" value="1"/>
</dbReference>
<dbReference type="Pfam" id="PF00059">
    <property type="entry name" value="Lectin_C"/>
    <property type="match status" value="1"/>
</dbReference>
<dbReference type="SMART" id="SM00034">
    <property type="entry name" value="CLECT"/>
    <property type="match status" value="1"/>
</dbReference>
<dbReference type="SUPFAM" id="SSF56436">
    <property type="entry name" value="C-type lectin-like"/>
    <property type="match status" value="1"/>
</dbReference>
<dbReference type="PROSITE" id="PS00615">
    <property type="entry name" value="C_TYPE_LECTIN_1"/>
    <property type="match status" value="1"/>
</dbReference>
<dbReference type="PROSITE" id="PS50041">
    <property type="entry name" value="C_TYPE_LECTIN_2"/>
    <property type="match status" value="1"/>
</dbReference>
<comment type="function">
    <text evidence="5 6 7 8 9 10">Calcium-dependent lectin that acts as a pattern recognition receptor (PRR) of the innate immune system: specifically recognizes and binds alpha-mannans on C.albicans hypheas (PubMed:17050534, PubMed:19703985, PubMed:20493731). Binding of C.albicans alpha-mannans to this receptor complex leads to phosphorylation of the immunoreceptor tyrosine-based activation motif (ITAM) of FCER1G, triggering activation of SYK, CARD9 and NF-kappa-B, consequently driving maturation of antigen-presenting cells and shaping antigen-specific priming of T-cells toward effector T-helper 1 and T-helper 17 cell subtypes (PubMed:17050534, PubMed:19703985, PubMed:20493731, PubMed:32358020). Also recognizes, in a mannose-dependent manner, allergens from house dust mite and fungi, by promoting cysteinyl leukotriene production (PubMed:19124755). Recognizes soluble elements from the eggs of Shistosoma mansoni altering adaptive immune responses (PubMed:21059925).</text>
</comment>
<comment type="subunit">
    <text evidence="1 5">Associated with FCER1G (PubMed:17050534). Heterodimer with CLEC4D; this heterodimer forms a pattern recognition receptor (PRR) against fungal infection (By similarity).</text>
</comment>
<comment type="subcellular location">
    <subcellularLocation>
        <location evidence="1">Cell membrane</location>
        <topology evidence="13">Single-pass type II membrane protein</topology>
    </subcellularLocation>
</comment>
<comment type="alternative products">
    <event type="alternative splicing"/>
    <isoform>
        <id>Q9JKF4-1</id>
        <name>1</name>
        <name>Alpha</name>
        <sequence type="displayed"/>
    </isoform>
    <isoform>
        <id>Q9JKF4-2</id>
        <name>2</name>
        <name>Beta</name>
        <sequence type="described" ref="VSP_012846"/>
    </isoform>
    <isoform>
        <id>Q9JKF4-3</id>
        <name>3</name>
        <name>Gamma</name>
        <sequence type="described" ref="VSP_012847"/>
    </isoform>
</comment>
<comment type="tissue specificity">
    <text evidence="4">Expressed by the XS52 DC (dendritic cell) line (at protein level). Expressed constitutively by the epidermis, and skin resident DC appear to be the major source of this expression. Expressed in the spleen and thymus. Expression was undetectable in non-DC lines, including macrophage lines (J774 and Raw), T-cell lines (7-17, HDK-1, and D10), B-cell hybridoma (5C5), a keratinocyte line (Pam 212), and a fibroblast line (NS01).</text>
</comment>
<comment type="domain">
    <text evidence="5">A short stretch of the intracellular domain (AA 8-14) proximal to the transmembrane domain is required for association with Fc receptor gamma chain.</text>
</comment>
<comment type="disruption phenotype">
    <text evidence="8">Deficient mice are healthy, fertile, with normal lymphoid cells, but show reduced survival after intravenous Candida albicans infection (PubMed:20493731). In deficient mice fungal burden is higher in kidneys of mutant and in response to yeast antigen inflammatory cytokines and Th17 cells are reduced (PubMed:20493731).</text>
</comment>
<comment type="online information" name="Functional Glycomics Gateway - Glycan Binding">
    <link uri="http://www.functionalglycomics.org/glycomics/GBPServlet?&amp;operationType=view&amp;cbpId=cbp_mou_Ctlect_361"/>
    <text>Dectin-2</text>
</comment>
<keyword id="KW-1064">Adaptive immunity</keyword>
<keyword id="KW-0025">Alternative splicing</keyword>
<keyword id="KW-0106">Calcium</keyword>
<keyword id="KW-1003">Cell membrane</keyword>
<keyword id="KW-1015">Disulfide bond</keyword>
<keyword id="KW-0325">Glycoprotein</keyword>
<keyword id="KW-0391">Immunity</keyword>
<keyword id="KW-0399">Innate immunity</keyword>
<keyword id="KW-0430">Lectin</keyword>
<keyword id="KW-0472">Membrane</keyword>
<keyword id="KW-0479">Metal-binding</keyword>
<keyword id="KW-1185">Reference proteome</keyword>
<keyword id="KW-0735">Signal-anchor</keyword>
<keyword id="KW-0812">Transmembrane</keyword>
<keyword id="KW-1133">Transmembrane helix</keyword>
<gene>
    <name evidence="14" type="primary">Clec6a</name>
    <name type="synonym">Clec4n</name>
    <name type="synonym">Clecsf10</name>
    <name evidence="12" type="synonym">Dectin2</name>
</gene>
<name>CLC6A_MOUSE</name>
<evidence type="ECO:0000250" key="1">
    <source>
        <dbReference type="UniProtKB" id="Q6EIG7"/>
    </source>
</evidence>
<evidence type="ECO:0000255" key="2"/>
<evidence type="ECO:0000255" key="3">
    <source>
        <dbReference type="PROSITE-ProRule" id="PRU00040"/>
    </source>
</evidence>
<evidence type="ECO:0000269" key="4">
    <source>
    </source>
</evidence>
<evidence type="ECO:0000269" key="5">
    <source>
    </source>
</evidence>
<evidence type="ECO:0000269" key="6">
    <source>
    </source>
</evidence>
<evidence type="ECO:0000269" key="7">
    <source>
    </source>
</evidence>
<evidence type="ECO:0000269" key="8">
    <source>
    </source>
</evidence>
<evidence type="ECO:0000269" key="9">
    <source>
    </source>
</evidence>
<evidence type="ECO:0000269" key="10">
    <source>
    </source>
</evidence>
<evidence type="ECO:0000303" key="11">
    <source>
    </source>
</evidence>
<evidence type="ECO:0000303" key="12">
    <source>
    </source>
</evidence>
<evidence type="ECO:0000305" key="13"/>
<evidence type="ECO:0000312" key="14">
    <source>
        <dbReference type="MGI" id="MGI:1861231"/>
    </source>
</evidence>
<feature type="chain" id="PRO_0000046636" description="C-type lectin domain family 6 member A">
    <location>
        <begin position="1"/>
        <end position="209"/>
    </location>
</feature>
<feature type="topological domain" description="Cytoplasmic" evidence="2">
    <location>
        <begin position="1"/>
        <end position="20"/>
    </location>
</feature>
<feature type="transmembrane region" description="Helical; Signal-anchor for type II membrane protein" evidence="2">
    <location>
        <begin position="21"/>
        <end position="43"/>
    </location>
</feature>
<feature type="topological domain" description="Extracellular" evidence="2">
    <location>
        <begin position="44"/>
        <end position="209"/>
    </location>
</feature>
<feature type="domain" description="C-type lectin" evidence="3">
    <location>
        <begin position="86"/>
        <end position="203"/>
    </location>
</feature>
<feature type="binding site" evidence="1">
    <location>
        <position position="116"/>
    </location>
    <ligand>
        <name>Ca(2+)</name>
        <dbReference type="ChEBI" id="CHEBI:29108"/>
        <label>1</label>
    </ligand>
</feature>
<feature type="binding site" evidence="1">
    <location>
        <position position="118"/>
    </location>
    <ligand>
        <name>Ca(2+)</name>
        <dbReference type="ChEBI" id="CHEBI:29108"/>
        <label>1</label>
    </ligand>
</feature>
<feature type="binding site" evidence="1">
    <location>
        <position position="122"/>
    </location>
    <ligand>
        <name>Ca(2+)</name>
        <dbReference type="ChEBI" id="CHEBI:29108"/>
        <label>1</label>
    </ligand>
</feature>
<feature type="binding site" evidence="1">
    <location>
        <begin position="168"/>
        <end position="170"/>
    </location>
    <ligand>
        <name>alpha-D-mannopyranose</name>
        <dbReference type="ChEBI" id="CHEBI:28729"/>
    </ligand>
</feature>
<feature type="binding site" evidence="1">
    <location>
        <position position="168"/>
    </location>
    <ligand>
        <name>Ca(2+)</name>
        <dbReference type="ChEBI" id="CHEBI:29108"/>
        <label>2</label>
    </ligand>
</feature>
<feature type="binding site" evidence="1">
    <location>
        <position position="170"/>
    </location>
    <ligand>
        <name>Ca(2+)</name>
        <dbReference type="ChEBI" id="CHEBI:29108"/>
        <label>2</label>
    </ligand>
</feature>
<feature type="binding site" evidence="1">
    <location>
        <position position="174"/>
    </location>
    <ligand>
        <name>alpha-D-mannopyranose</name>
        <dbReference type="ChEBI" id="CHEBI:28729"/>
    </ligand>
</feature>
<feature type="binding site" evidence="1">
    <location>
        <position position="174"/>
    </location>
    <ligand>
        <name>Ca(2+)</name>
        <dbReference type="ChEBI" id="CHEBI:29108"/>
        <label>2</label>
    </ligand>
</feature>
<feature type="binding site" evidence="1">
    <location>
        <position position="182"/>
    </location>
    <ligand>
        <name>alpha-D-mannopyranose</name>
        <dbReference type="ChEBI" id="CHEBI:28729"/>
    </ligand>
</feature>
<feature type="binding site" evidence="1">
    <location>
        <begin position="190"/>
        <end position="191"/>
    </location>
    <ligand>
        <name>alpha-D-mannopyranose</name>
        <dbReference type="ChEBI" id="CHEBI:28729"/>
    </ligand>
</feature>
<feature type="binding site" evidence="1">
    <location>
        <position position="190"/>
    </location>
    <ligand>
        <name>Ca(2+)</name>
        <dbReference type="ChEBI" id="CHEBI:29108"/>
        <label>2</label>
    </ligand>
</feature>
<feature type="binding site" evidence="1">
    <location>
        <position position="191"/>
    </location>
    <ligand>
        <name>Ca(2+)</name>
        <dbReference type="ChEBI" id="CHEBI:29108"/>
        <label>2</label>
    </ligand>
</feature>
<feature type="binding site" evidence="1">
    <location>
        <position position="203"/>
    </location>
    <ligand>
        <name>Ca(2+)</name>
        <dbReference type="ChEBI" id="CHEBI:29108"/>
        <label>1</label>
    </ligand>
</feature>
<feature type="glycosylation site" description="N-linked (GlcNAc...) asparagine" evidence="2">
    <location>
        <position position="131"/>
    </location>
</feature>
<feature type="disulfide bond" evidence="1">
    <location>
        <begin position="64"/>
        <end position="78"/>
    </location>
</feature>
<feature type="disulfide bond" evidence="3">
    <location>
        <begin position="79"/>
        <end position="90"/>
    </location>
</feature>
<feature type="disulfide bond" evidence="3">
    <location>
        <begin position="107"/>
        <end position="202"/>
    </location>
</feature>
<feature type="disulfide bond" evidence="3">
    <location>
        <begin position="176"/>
        <end position="194"/>
    </location>
</feature>
<feature type="splice variant" id="VSP_012846" description="In isoform 2." evidence="11">
    <location>
        <begin position="39"/>
        <end position="72"/>
    </location>
</feature>
<feature type="splice variant" id="VSP_012847" description="In isoform 3." evidence="11">
    <location>
        <begin position="142"/>
        <end position="182"/>
    </location>
</feature>
<feature type="mutagenesis site" description="Does not affect association with Fc receptor gamma chain." evidence="5">
    <original>R</original>
    <variation>V</variation>
    <location>
        <position position="17"/>
    </location>
</feature>